<sequence>MEIKFTIKQVVAVGIGAALFVVIGMINIPTPVPNTSIQLQYAVQALLSIIFGPIIGLLVGLIGHAIKDSLVGYGLWWTWIIASGLFGLVVGLFRKYVRVINSVFDWKDILIFNLIQLLANALVWGVLAPLGDVVIYQEAAEKVFAQGIVAGIANGVSVAIAGTLLLLAYAGTQTRAGSLKKD</sequence>
<dbReference type="EMBL" id="CP001015">
    <property type="protein sequence ID" value="ACF55776.1"/>
    <property type="molecule type" value="Genomic_DNA"/>
</dbReference>
<dbReference type="SMR" id="B5E1T5"/>
<dbReference type="KEGG" id="spx:SPG_0438"/>
<dbReference type="HOGENOM" id="CLU_120023_0_0_9"/>
<dbReference type="GO" id="GO:0005886">
    <property type="term" value="C:plasma membrane"/>
    <property type="evidence" value="ECO:0007669"/>
    <property type="project" value="UniProtKB-SubCell"/>
</dbReference>
<dbReference type="Gene3D" id="1.10.1760.20">
    <property type="match status" value="1"/>
</dbReference>
<dbReference type="HAMAP" id="MF_01572">
    <property type="entry name" value="UPF0397"/>
    <property type="match status" value="1"/>
</dbReference>
<dbReference type="InterPro" id="IPR009825">
    <property type="entry name" value="ECF_substrate-spec-like"/>
</dbReference>
<dbReference type="InterPro" id="IPR022914">
    <property type="entry name" value="UPF0397"/>
</dbReference>
<dbReference type="NCBIfam" id="NF010182">
    <property type="entry name" value="PRK13661.1"/>
    <property type="match status" value="1"/>
</dbReference>
<dbReference type="PANTHER" id="PTHR37815">
    <property type="entry name" value="UPF0397 PROTEIN BC_2624-RELATED"/>
    <property type="match status" value="1"/>
</dbReference>
<dbReference type="PANTHER" id="PTHR37815:SF3">
    <property type="entry name" value="UPF0397 PROTEIN SPR0429"/>
    <property type="match status" value="1"/>
</dbReference>
<dbReference type="Pfam" id="PF07155">
    <property type="entry name" value="ECF-ribofla_trS"/>
    <property type="match status" value="1"/>
</dbReference>
<feature type="chain" id="PRO_1000200764" description="UPF0397 protein SPG_0438">
    <location>
        <begin position="1"/>
        <end position="182"/>
    </location>
</feature>
<feature type="transmembrane region" description="Helical" evidence="1">
    <location>
        <begin position="10"/>
        <end position="30"/>
    </location>
</feature>
<feature type="transmembrane region" description="Helical" evidence="1">
    <location>
        <begin position="46"/>
        <end position="66"/>
    </location>
</feature>
<feature type="transmembrane region" description="Helical" evidence="1">
    <location>
        <begin position="73"/>
        <end position="93"/>
    </location>
</feature>
<feature type="transmembrane region" description="Helical" evidence="1">
    <location>
        <begin position="109"/>
        <end position="129"/>
    </location>
</feature>
<feature type="transmembrane region" description="Helical" evidence="1">
    <location>
        <begin position="148"/>
        <end position="168"/>
    </location>
</feature>
<organism>
    <name type="scientific">Streptococcus pneumoniae serotype 19F (strain G54)</name>
    <dbReference type="NCBI Taxonomy" id="512566"/>
    <lineage>
        <taxon>Bacteria</taxon>
        <taxon>Bacillati</taxon>
        <taxon>Bacillota</taxon>
        <taxon>Bacilli</taxon>
        <taxon>Lactobacillales</taxon>
        <taxon>Streptococcaceae</taxon>
        <taxon>Streptococcus</taxon>
    </lineage>
</organism>
<accession>B5E1T5</accession>
<keyword id="KW-1003">Cell membrane</keyword>
<keyword id="KW-0472">Membrane</keyword>
<keyword id="KW-0812">Transmembrane</keyword>
<keyword id="KW-1133">Transmembrane helix</keyword>
<evidence type="ECO:0000255" key="1">
    <source>
        <dbReference type="HAMAP-Rule" id="MF_01572"/>
    </source>
</evidence>
<proteinExistence type="inferred from homology"/>
<name>Y438_STRP4</name>
<comment type="subcellular location">
    <subcellularLocation>
        <location evidence="1">Cell membrane</location>
        <topology evidence="1">Multi-pass membrane protein</topology>
    </subcellularLocation>
</comment>
<comment type="similarity">
    <text evidence="1">Belongs to the UPF0397 family.</text>
</comment>
<gene>
    <name type="ordered locus">SPG_0438</name>
</gene>
<reference key="1">
    <citation type="journal article" date="2001" name="Microb. Drug Resist.">
        <title>Annotated draft genomic sequence from a Streptococcus pneumoniae type 19F clinical isolate.</title>
        <authorList>
            <person name="Dopazo J."/>
            <person name="Mendoza A."/>
            <person name="Herrero J."/>
            <person name="Caldara F."/>
            <person name="Humbert Y."/>
            <person name="Friedli L."/>
            <person name="Guerrier M."/>
            <person name="Grand-Schenk E."/>
            <person name="Gandin C."/>
            <person name="de Francesco M."/>
            <person name="Polissi A."/>
            <person name="Buell G."/>
            <person name="Feger G."/>
            <person name="Garcia E."/>
            <person name="Peitsch M."/>
            <person name="Garcia-Bustos J.F."/>
        </authorList>
    </citation>
    <scope>NUCLEOTIDE SEQUENCE [LARGE SCALE GENOMIC DNA]</scope>
    <source>
        <strain>G54</strain>
    </source>
</reference>
<reference key="2">
    <citation type="submission" date="2008-03" db="EMBL/GenBank/DDBJ databases">
        <title>Pneumococcal beta glucoside metabolism investigated by whole genome comparison.</title>
        <authorList>
            <person name="Mulas L."/>
            <person name="Trappetti C."/>
            <person name="Hakenbeck R."/>
            <person name="Iannelli F."/>
            <person name="Pozzi G."/>
            <person name="Davidsen T.M."/>
            <person name="Tettelin H."/>
            <person name="Oggioni M."/>
        </authorList>
    </citation>
    <scope>NUCLEOTIDE SEQUENCE [LARGE SCALE GENOMIC DNA]</scope>
    <source>
        <strain>G54</strain>
    </source>
</reference>
<protein>
    <recommendedName>
        <fullName evidence="1">UPF0397 protein SPG_0438</fullName>
    </recommendedName>
</protein>